<reference key="1">
    <citation type="journal article" date="1998" name="Science">
        <title>Genome sequence of the nematode C. elegans: a platform for investigating biology.</title>
        <authorList>
            <consortium name="The C. elegans sequencing consortium"/>
        </authorList>
    </citation>
    <scope>NUCLEOTIDE SEQUENCE [LARGE SCALE GENOMIC DNA]</scope>
    <source>
        <strain>Bristol N2</strain>
    </source>
</reference>
<organism>
    <name type="scientific">Caenorhabditis elegans</name>
    <dbReference type="NCBI Taxonomy" id="6239"/>
    <lineage>
        <taxon>Eukaryota</taxon>
        <taxon>Metazoa</taxon>
        <taxon>Ecdysozoa</taxon>
        <taxon>Nematoda</taxon>
        <taxon>Chromadorea</taxon>
        <taxon>Rhabditida</taxon>
        <taxon>Rhabditina</taxon>
        <taxon>Rhabditomorpha</taxon>
        <taxon>Rhabditoidea</taxon>
        <taxon>Rhabditidae</taxon>
        <taxon>Peloderinae</taxon>
        <taxon>Caenorhabditis</taxon>
    </lineage>
</organism>
<gene>
    <name type="primary">lge-1</name>
    <name type="ORF">K09C8.4</name>
</gene>
<protein>
    <recommendedName>
        <fullName>Glycosyltransferase-like protein LARGE</fullName>
        <ecNumber>2.4.-.-</ecNumber>
    </recommendedName>
</protein>
<evidence type="ECO:0000250" key="1"/>
<evidence type="ECO:0000255" key="2"/>
<evidence type="ECO:0000305" key="3"/>
<dbReference type="EC" id="2.4.-.-"/>
<dbReference type="EMBL" id="Z68006">
    <property type="protein sequence ID" value="CAA91997.4"/>
    <property type="molecule type" value="Genomic_DNA"/>
</dbReference>
<dbReference type="PIR" id="T23541">
    <property type="entry name" value="T23541"/>
</dbReference>
<dbReference type="RefSeq" id="NP_509833.3">
    <property type="nucleotide sequence ID" value="NM_077432.6"/>
</dbReference>
<dbReference type="SMR" id="Q21389"/>
<dbReference type="FunCoup" id="Q21389">
    <property type="interactions" value="302"/>
</dbReference>
<dbReference type="STRING" id="6239.K09C8.4.1"/>
<dbReference type="CAZy" id="GT49">
    <property type="family name" value="Glycosyltransferase Family 49"/>
</dbReference>
<dbReference type="CAZy" id="GT8">
    <property type="family name" value="Glycosyltransferase Family 8"/>
</dbReference>
<dbReference type="GlyCosmos" id="Q21389">
    <property type="glycosylation" value="11 sites, No reported glycans"/>
</dbReference>
<dbReference type="PaxDb" id="6239-K09C8.4"/>
<dbReference type="EnsemblMetazoa" id="K09C8.4.1">
    <property type="protein sequence ID" value="K09C8.4.1"/>
    <property type="gene ID" value="WBGene00010716"/>
</dbReference>
<dbReference type="GeneID" id="187206"/>
<dbReference type="KEGG" id="cel:CELE_K09C8.4"/>
<dbReference type="UCSC" id="K09C8.4">
    <property type="organism name" value="c. elegans"/>
</dbReference>
<dbReference type="AGR" id="WB:WBGene00010716"/>
<dbReference type="CTD" id="187206"/>
<dbReference type="WormBase" id="K09C8.4">
    <property type="protein sequence ID" value="CE44089"/>
    <property type="gene ID" value="WBGene00010716"/>
    <property type="gene designation" value="lge-1"/>
</dbReference>
<dbReference type="eggNOG" id="KOG3765">
    <property type="taxonomic scope" value="Eukaryota"/>
</dbReference>
<dbReference type="GeneTree" id="ENSGT00940000170953"/>
<dbReference type="HOGENOM" id="CLU_019238_3_2_1"/>
<dbReference type="InParanoid" id="Q21389"/>
<dbReference type="OMA" id="LPCIWNV"/>
<dbReference type="OrthoDB" id="411524at2759"/>
<dbReference type="PhylomeDB" id="Q21389"/>
<dbReference type="PRO" id="PR:Q21389"/>
<dbReference type="Proteomes" id="UP000001940">
    <property type="component" value="Chromosome X"/>
</dbReference>
<dbReference type="Bgee" id="WBGene00010716">
    <property type="expression patterns" value="Expressed in larva and 1 other cell type or tissue"/>
</dbReference>
<dbReference type="GO" id="GO:0005794">
    <property type="term" value="C:Golgi apparatus"/>
    <property type="evidence" value="ECO:0000318"/>
    <property type="project" value="GO_Central"/>
</dbReference>
<dbReference type="GO" id="GO:0000139">
    <property type="term" value="C:Golgi membrane"/>
    <property type="evidence" value="ECO:0007669"/>
    <property type="project" value="UniProtKB-SubCell"/>
</dbReference>
<dbReference type="GO" id="GO:0015020">
    <property type="term" value="F:glucuronosyltransferase activity"/>
    <property type="evidence" value="ECO:0000318"/>
    <property type="project" value="GO_Central"/>
</dbReference>
<dbReference type="GO" id="GO:0042285">
    <property type="term" value="F:xylosyltransferase activity"/>
    <property type="evidence" value="ECO:0000318"/>
    <property type="project" value="GO_Central"/>
</dbReference>
<dbReference type="GO" id="GO:0035269">
    <property type="term" value="P:protein O-linked mannosylation"/>
    <property type="evidence" value="ECO:0000318"/>
    <property type="project" value="GO_Central"/>
</dbReference>
<dbReference type="CDD" id="cd06431">
    <property type="entry name" value="GT8_LARGE_C"/>
    <property type="match status" value="1"/>
</dbReference>
<dbReference type="FunFam" id="3.90.550.10:FF:000229">
    <property type="entry name" value="Glycosyltransferase-like protein LARGE"/>
    <property type="match status" value="1"/>
</dbReference>
<dbReference type="FunFam" id="3.90.550.10:FF:000016">
    <property type="entry name" value="LARGE xylosyl- and glucuronyltransferase 2"/>
    <property type="match status" value="1"/>
</dbReference>
<dbReference type="Gene3D" id="3.90.550.10">
    <property type="entry name" value="Spore Coat Polysaccharide Biosynthesis Protein SpsA, Chain A"/>
    <property type="match status" value="2"/>
</dbReference>
<dbReference type="InterPro" id="IPR002495">
    <property type="entry name" value="Glyco_trans_8"/>
</dbReference>
<dbReference type="InterPro" id="IPR029044">
    <property type="entry name" value="Nucleotide-diphossugar_trans"/>
</dbReference>
<dbReference type="InterPro" id="IPR051292">
    <property type="entry name" value="Xyl/GlcA_transferase"/>
</dbReference>
<dbReference type="PANTHER" id="PTHR12270:SF25">
    <property type="entry name" value="GLYCOSYLTRANSFERASE-LIKE PROTEIN LARGE"/>
    <property type="match status" value="1"/>
</dbReference>
<dbReference type="PANTHER" id="PTHR12270">
    <property type="entry name" value="GLYCOSYLTRANSFERASE-RELATED"/>
    <property type="match status" value="1"/>
</dbReference>
<dbReference type="Pfam" id="PF13896">
    <property type="entry name" value="Glyco_transf_49"/>
    <property type="match status" value="1"/>
</dbReference>
<dbReference type="Pfam" id="PF01501">
    <property type="entry name" value="Glyco_transf_8"/>
    <property type="match status" value="1"/>
</dbReference>
<dbReference type="SUPFAM" id="SSF53448">
    <property type="entry name" value="Nucleotide-diphospho-sugar transferases"/>
    <property type="match status" value="2"/>
</dbReference>
<keyword id="KW-0325">Glycoprotein</keyword>
<keyword id="KW-0328">Glycosyltransferase</keyword>
<keyword id="KW-0333">Golgi apparatus</keyword>
<keyword id="KW-0472">Membrane</keyword>
<keyword id="KW-1185">Reference proteome</keyword>
<keyword id="KW-0735">Signal-anchor</keyword>
<keyword id="KW-0808">Transferase</keyword>
<keyword id="KW-0812">Transmembrane</keyword>
<keyword id="KW-1133">Transmembrane helix</keyword>
<comment type="function">
    <text evidence="1">Probable glycosyltransferase.</text>
</comment>
<comment type="subcellular location">
    <subcellularLocation>
        <location evidence="1">Golgi apparatus membrane</location>
        <topology evidence="1">Single-pass type II membrane protein</topology>
    </subcellularLocation>
</comment>
<comment type="similarity">
    <text evidence="3">Belongs to the glycosyltransferase 8 family.</text>
</comment>
<feature type="chain" id="PRO_0000226818" description="Glycosyltransferase-like protein LARGE">
    <location>
        <begin position="1"/>
        <end position="631"/>
    </location>
</feature>
<feature type="topological domain" description="Cytoplasmic" evidence="2">
    <location>
        <begin position="1"/>
        <end position="6"/>
    </location>
</feature>
<feature type="transmembrane region" description="Helical; Signal-anchor for type II membrane protein" evidence="2">
    <location>
        <begin position="7"/>
        <end position="27"/>
    </location>
</feature>
<feature type="topological domain" description="Lumenal" evidence="2">
    <location>
        <begin position="28"/>
        <end position="631"/>
    </location>
</feature>
<feature type="glycosylation site" description="N-linked (GlcNAc...) asparagine" evidence="2">
    <location>
        <position position="95"/>
    </location>
</feature>
<feature type="glycosylation site" description="N-linked (GlcNAc...) asparagine" evidence="2">
    <location>
        <position position="105"/>
    </location>
</feature>
<feature type="glycosylation site" description="N-linked (GlcNAc...) asparagine" evidence="2">
    <location>
        <position position="167"/>
    </location>
</feature>
<feature type="glycosylation site" description="N-linked (GlcNAc...) asparagine" evidence="2">
    <location>
        <position position="177"/>
    </location>
</feature>
<feature type="glycosylation site" description="N-linked (GlcNAc...) asparagine" evidence="2">
    <location>
        <position position="287"/>
    </location>
</feature>
<feature type="glycosylation site" description="N-linked (GlcNAc...) asparagine" evidence="2">
    <location>
        <position position="400"/>
    </location>
</feature>
<feature type="glycosylation site" description="N-linked (GlcNAc...) asparagine" evidence="2">
    <location>
        <position position="485"/>
    </location>
</feature>
<feature type="glycosylation site" description="N-linked (GlcNAc...) asparagine" evidence="2">
    <location>
        <position position="502"/>
    </location>
</feature>
<feature type="glycosylation site" description="N-linked (GlcNAc...) asparagine" evidence="2">
    <location>
        <position position="521"/>
    </location>
</feature>
<feature type="glycosylation site" description="N-linked (GlcNAc...) asparagine" evidence="2">
    <location>
        <position position="529"/>
    </location>
</feature>
<feature type="glycosylation site" description="N-linked (GlcNAc...) asparagine" evidence="2">
    <location>
        <position position="593"/>
    </location>
</feature>
<proteinExistence type="inferred from homology"/>
<sequence length="631" mass="74525">MQSNYSISYFLLILFTGTSSYFTIWNFVDHTRVGAFPEEDYIRLAYIIGGNFMTRLMFMQHFKSVLKYSDHFFRLHLITDENHRSDIHELMTSWNISNCEWFFHNLTEFEKRVAWIPNSHYSKYYGLSKLLIPEIIGNDIGKIMFMDVDIIFQTNIFDLWKQFRNFNNSQVFGMVENLSDWYLNKDGKKSVWPALGRGFNTGIIMFDLDKLRKNGWASKWRVVANKYLRIHGKTAMSDQDIFNAYIHDYPTEIIQIPCAYNYQLGALTKSKELCPETPLALHFNSQNKTVGKNYAFFDKIRKAFDEMDGSDLKRRRRSFKGNNQKDICHEYLPLDNFRIIPNAIGRMTKPAELCMVTQFSKDRLNHFLESANAWRHPISTAVYGKDKDLLDIAKAVTELNRTDITIHLVFEEPTESWMLDSLYPINFLRNVAIEHANCKYILMTDVDFVVLGDYGTIIDQTGNLKQKEVLVIPALEMTYPQLRLNLSNFLSRKDLVIEHLLNKTIQTFRETIWPSSHVPTNISKWIKSNRTYMVNYEKNYEPYFVIKKEECPFYDQRFGGFGWNKVTHVMQLKMMNYKFLVSPTSFMIHQNHNASKSLKRWRRDPHYQKCLHTLKNKFMKKTASRLGIKLR</sequence>
<name>LGE1_CAEEL</name>
<accession>Q21389</accession>